<sequence length="588" mass="64422">MKLPVREFDAVVIGAGGAGMRAALQISQSGQTCALLSKVFPTRSHTVSAQGGITVALGNTHEDNWEWHMYDTVKGSDYIGDQDAIEYMCKTGPEAILELEHMGLPFSRLDDGRIYQRPFGGQSKNFGGEQAARTAAAADRTGHALLHTLYQQNLKNHTTIFSEWYALDLVKNQDGAVVGCTALCIETGEVVYFKARATVLATGGAGRIYQSTTNAHINTGDGVGMAIRAGVPVQDMEMWQFHPTGIAGAGVLVTEGCRGEGGYLLNKHGERFMERYAPNAKDLAGRDVVARSIMIEIREGRGCDGPWGPHAKLKLDHLGKEVLESRLPGILELSRTFAHVDPVKEPIPVIPTCHYMMGGIPTKVTGQALTVNEKGEDVVVPGLFAVGEIACVSVHGANRLGGNSLLDLVVFGRAAGLHLQESIAEQGALRDASESDVEASLDRLNRWNNNRNGEDPVAIRKALQECMQHNFSVFREGDAMAKGLEQLKVIRERLKNARLDDTSSEFNTQRVECLELDNLMETAYATAVSANFRTESRGAHSRFDFPDRDDENWLCHSLYLPESESMTRRSVNMEPKLRPAFPPKIRTY</sequence>
<reference key="1">
    <citation type="journal article" date="2001" name="Nature">
        <title>Genome sequence of enterohaemorrhagic Escherichia coli O157:H7.</title>
        <authorList>
            <person name="Perna N.T."/>
            <person name="Plunkett G. III"/>
            <person name="Burland V."/>
            <person name="Mau B."/>
            <person name="Glasner J.D."/>
            <person name="Rose D.J."/>
            <person name="Mayhew G.F."/>
            <person name="Evans P.S."/>
            <person name="Gregor J."/>
            <person name="Kirkpatrick H.A."/>
            <person name="Posfai G."/>
            <person name="Hackett J."/>
            <person name="Klink S."/>
            <person name="Boutin A."/>
            <person name="Shao Y."/>
            <person name="Miller L."/>
            <person name="Grotbeck E.J."/>
            <person name="Davis N.W."/>
            <person name="Lim A."/>
            <person name="Dimalanta E.T."/>
            <person name="Potamousis K."/>
            <person name="Apodaca J."/>
            <person name="Anantharaman T.S."/>
            <person name="Lin J."/>
            <person name="Yen G."/>
            <person name="Schwartz D.C."/>
            <person name="Welch R.A."/>
            <person name="Blattner F.R."/>
        </authorList>
    </citation>
    <scope>NUCLEOTIDE SEQUENCE [LARGE SCALE GENOMIC DNA]</scope>
    <source>
        <strain>O157:H7 / EDL933 / ATCC 700927 / EHEC</strain>
    </source>
</reference>
<reference key="2">
    <citation type="journal article" date="2001" name="DNA Res.">
        <title>Complete genome sequence of enterohemorrhagic Escherichia coli O157:H7 and genomic comparison with a laboratory strain K-12.</title>
        <authorList>
            <person name="Hayashi T."/>
            <person name="Makino K."/>
            <person name="Ohnishi M."/>
            <person name="Kurokawa K."/>
            <person name="Ishii K."/>
            <person name="Yokoyama K."/>
            <person name="Han C.-G."/>
            <person name="Ohtsubo E."/>
            <person name="Nakayama K."/>
            <person name="Murata T."/>
            <person name="Tanaka M."/>
            <person name="Tobe T."/>
            <person name="Iida T."/>
            <person name="Takami H."/>
            <person name="Honda T."/>
            <person name="Sasakawa C."/>
            <person name="Ogasawara N."/>
            <person name="Yasunaga T."/>
            <person name="Kuhara S."/>
            <person name="Shiba T."/>
            <person name="Hattori M."/>
            <person name="Shinagawa H."/>
        </authorList>
    </citation>
    <scope>NUCLEOTIDE SEQUENCE [LARGE SCALE GENOMIC DNA]</scope>
    <source>
        <strain>O157:H7 / Sakai / RIMD 0509952 / EHEC</strain>
    </source>
</reference>
<organism>
    <name type="scientific">Escherichia coli O157:H7</name>
    <dbReference type="NCBI Taxonomy" id="83334"/>
    <lineage>
        <taxon>Bacteria</taxon>
        <taxon>Pseudomonadati</taxon>
        <taxon>Pseudomonadota</taxon>
        <taxon>Gammaproteobacteria</taxon>
        <taxon>Enterobacterales</taxon>
        <taxon>Enterobacteriaceae</taxon>
        <taxon>Escherichia</taxon>
    </lineage>
</organism>
<protein>
    <recommendedName>
        <fullName>Succinate dehydrogenase flavoprotein subunit</fullName>
        <ecNumber evidence="1">1.3.5.1</ecNumber>
    </recommendedName>
</protein>
<comment type="function">
    <text evidence="1">Two distinct, membrane-bound, FAD-containing enzymes are responsible for the catalysis of fumarate and succinate interconversion; the fumarate reductase is used in anaerobic growth, and the succinate dehydrogenase is used in aerobic growth.</text>
</comment>
<comment type="catalytic activity">
    <reaction evidence="1">
        <text>a quinone + succinate = fumarate + a quinol</text>
        <dbReference type="Rhea" id="RHEA:40523"/>
        <dbReference type="ChEBI" id="CHEBI:24646"/>
        <dbReference type="ChEBI" id="CHEBI:29806"/>
        <dbReference type="ChEBI" id="CHEBI:30031"/>
        <dbReference type="ChEBI" id="CHEBI:132124"/>
        <dbReference type="EC" id="1.3.5.1"/>
    </reaction>
</comment>
<comment type="cofactor">
    <cofactor evidence="1">
        <name>FAD</name>
        <dbReference type="ChEBI" id="CHEBI:57692"/>
    </cofactor>
</comment>
<comment type="pathway">
    <text evidence="1">Carbohydrate metabolism; tricarboxylic acid cycle; fumarate from succinate (bacterial route): step 1/1.</text>
</comment>
<comment type="subunit">
    <text evidence="1">Part of an enzyme complex containing four subunits: a flavoprotein, an iron-sulfur, cytochrome b-556, and a hydrophobic anchor protein. The complex forms trimers.</text>
</comment>
<comment type="subcellular location">
    <subcellularLocation>
        <location evidence="1">Cell inner membrane</location>
        <topology evidence="1">Peripheral membrane protein</topology>
        <orientation evidence="1">Cytoplasmic side</orientation>
    </subcellularLocation>
</comment>
<comment type="similarity">
    <text evidence="2">Belongs to the FAD-dependent oxidoreductase 2 family. FRD/SDH subfamily.</text>
</comment>
<evidence type="ECO:0000250" key="1">
    <source>
        <dbReference type="UniProtKB" id="P0AC41"/>
    </source>
</evidence>
<evidence type="ECO:0000305" key="2"/>
<feature type="chain" id="PRO_0000158653" description="Succinate dehydrogenase flavoprotein subunit">
    <location>
        <begin position="1"/>
        <end position="588"/>
    </location>
</feature>
<feature type="active site" description="Proton acceptor" evidence="1">
    <location>
        <position position="286"/>
    </location>
</feature>
<feature type="binding site" evidence="1">
    <location>
        <begin position="14"/>
        <end position="19"/>
    </location>
    <ligand>
        <name>FAD</name>
        <dbReference type="ChEBI" id="CHEBI:57692"/>
    </ligand>
</feature>
<feature type="binding site" evidence="1">
    <location>
        <begin position="37"/>
        <end position="52"/>
    </location>
    <ligand>
        <name>FAD</name>
        <dbReference type="ChEBI" id="CHEBI:57692"/>
    </ligand>
</feature>
<feature type="binding site" evidence="1">
    <location>
        <position position="221"/>
    </location>
    <ligand>
        <name>FAD</name>
        <dbReference type="ChEBI" id="CHEBI:57692"/>
    </ligand>
</feature>
<feature type="binding site" evidence="1">
    <location>
        <position position="242"/>
    </location>
    <ligand>
        <name>substrate</name>
    </ligand>
</feature>
<feature type="binding site" evidence="1">
    <location>
        <position position="254"/>
    </location>
    <ligand>
        <name>substrate</name>
    </ligand>
</feature>
<feature type="binding site" evidence="1">
    <location>
        <position position="354"/>
    </location>
    <ligand>
        <name>substrate</name>
    </ligand>
</feature>
<feature type="binding site" evidence="1">
    <location>
        <position position="388"/>
    </location>
    <ligand>
        <name>FAD</name>
        <dbReference type="ChEBI" id="CHEBI:57692"/>
    </ligand>
</feature>
<feature type="binding site" evidence="1">
    <location>
        <position position="399"/>
    </location>
    <ligand>
        <name>substrate</name>
    </ligand>
</feature>
<feature type="binding site" evidence="1">
    <location>
        <begin position="404"/>
        <end position="405"/>
    </location>
    <ligand>
        <name>FAD</name>
        <dbReference type="ChEBI" id="CHEBI:57692"/>
    </ligand>
</feature>
<feature type="modified residue" description="Tele-8alpha-FAD histidine" evidence="1">
    <location>
        <position position="45"/>
    </location>
</feature>
<feature type="modified residue" description="N6-acetyllysine" evidence="1">
    <location>
        <position position="267"/>
    </location>
</feature>
<proteinExistence type="inferred from homology"/>
<accession>P0AC43</accession>
<accession>P10444</accession>
<accession>P78282</accession>
<dbReference type="EC" id="1.3.5.1" evidence="1"/>
<dbReference type="EMBL" id="AE005174">
    <property type="protein sequence ID" value="AAG55047.1"/>
    <property type="molecule type" value="Genomic_DNA"/>
</dbReference>
<dbReference type="EMBL" id="BA000007">
    <property type="protein sequence ID" value="BAB34171.1"/>
    <property type="molecule type" value="Genomic_DNA"/>
</dbReference>
<dbReference type="PIR" id="D90722">
    <property type="entry name" value="D90722"/>
</dbReference>
<dbReference type="RefSeq" id="NP_308775.1">
    <property type="nucleotide sequence ID" value="NC_002695.1"/>
</dbReference>
<dbReference type="RefSeq" id="WP_000775540.1">
    <property type="nucleotide sequence ID" value="NZ_VOAI01000019.1"/>
</dbReference>
<dbReference type="SMR" id="P0AC43"/>
<dbReference type="STRING" id="155864.Z0877"/>
<dbReference type="GeneID" id="917480"/>
<dbReference type="GeneID" id="93776761"/>
<dbReference type="KEGG" id="ece:Z0877"/>
<dbReference type="KEGG" id="ecs:ECs_0748"/>
<dbReference type="PATRIC" id="fig|386585.9.peg.866"/>
<dbReference type="eggNOG" id="COG1053">
    <property type="taxonomic scope" value="Bacteria"/>
</dbReference>
<dbReference type="HOGENOM" id="CLU_014312_6_1_6"/>
<dbReference type="OMA" id="PTGIWRM"/>
<dbReference type="UniPathway" id="UPA00223">
    <property type="reaction ID" value="UER01005"/>
</dbReference>
<dbReference type="Proteomes" id="UP000000558">
    <property type="component" value="Chromosome"/>
</dbReference>
<dbReference type="Proteomes" id="UP000002519">
    <property type="component" value="Chromosome"/>
</dbReference>
<dbReference type="GO" id="GO:0005886">
    <property type="term" value="C:plasma membrane"/>
    <property type="evidence" value="ECO:0007669"/>
    <property type="project" value="UniProtKB-SubCell"/>
</dbReference>
<dbReference type="GO" id="GO:0009055">
    <property type="term" value="F:electron transfer activity"/>
    <property type="evidence" value="ECO:0007669"/>
    <property type="project" value="TreeGrafter"/>
</dbReference>
<dbReference type="GO" id="GO:0050660">
    <property type="term" value="F:flavin adenine dinucleotide binding"/>
    <property type="evidence" value="ECO:0007669"/>
    <property type="project" value="InterPro"/>
</dbReference>
<dbReference type="GO" id="GO:0008177">
    <property type="term" value="F:succinate dehydrogenase (quinone) activity"/>
    <property type="evidence" value="ECO:0007669"/>
    <property type="project" value="UniProtKB-EC"/>
</dbReference>
<dbReference type="GO" id="GO:0009061">
    <property type="term" value="P:anaerobic respiration"/>
    <property type="evidence" value="ECO:0007669"/>
    <property type="project" value="TreeGrafter"/>
</dbReference>
<dbReference type="GO" id="GO:0022900">
    <property type="term" value="P:electron transport chain"/>
    <property type="evidence" value="ECO:0007669"/>
    <property type="project" value="InterPro"/>
</dbReference>
<dbReference type="GO" id="GO:0006099">
    <property type="term" value="P:tricarboxylic acid cycle"/>
    <property type="evidence" value="ECO:0007669"/>
    <property type="project" value="UniProtKB-UniPathway"/>
</dbReference>
<dbReference type="FunFam" id="3.90.700.10:FF:000001">
    <property type="entry name" value="Mitochondrial succinate dehydrogenase flavoprotein subunit"/>
    <property type="match status" value="1"/>
</dbReference>
<dbReference type="FunFam" id="4.10.80.40:FF:000001">
    <property type="entry name" value="Succinate dehydrogenase flavoprotein subunit"/>
    <property type="match status" value="1"/>
</dbReference>
<dbReference type="FunFam" id="1.20.58.100:FF:000001">
    <property type="entry name" value="Succinate dehydrogenase flavoprotein subunit (SdhA)"/>
    <property type="match status" value="1"/>
</dbReference>
<dbReference type="Gene3D" id="3.50.50.60">
    <property type="entry name" value="FAD/NAD(P)-binding domain"/>
    <property type="match status" value="1"/>
</dbReference>
<dbReference type="Gene3D" id="1.20.58.100">
    <property type="entry name" value="Fumarate reductase/succinate dehydrogenase flavoprotein-like, C-terminal domain"/>
    <property type="match status" value="1"/>
</dbReference>
<dbReference type="Gene3D" id="4.10.80.40">
    <property type="entry name" value="succinate dehydrogenase protein domain"/>
    <property type="match status" value="1"/>
</dbReference>
<dbReference type="Gene3D" id="3.90.700.10">
    <property type="entry name" value="Succinate dehydrogenase/fumarate reductase flavoprotein, catalytic domain"/>
    <property type="match status" value="1"/>
</dbReference>
<dbReference type="InterPro" id="IPR003953">
    <property type="entry name" value="FAD-dep_OxRdtase_2_FAD-bd"/>
</dbReference>
<dbReference type="InterPro" id="IPR036188">
    <property type="entry name" value="FAD/NAD-bd_sf"/>
</dbReference>
<dbReference type="InterPro" id="IPR003952">
    <property type="entry name" value="FRD_SDH_FAD_BS"/>
</dbReference>
<dbReference type="InterPro" id="IPR037099">
    <property type="entry name" value="Fum_R/Succ_DH_flav-like_C_sf"/>
</dbReference>
<dbReference type="InterPro" id="IPR015939">
    <property type="entry name" value="Fum_Rdtase/Succ_DH_flav-like_C"/>
</dbReference>
<dbReference type="InterPro" id="IPR030664">
    <property type="entry name" value="SdhA/FrdA/AprA"/>
</dbReference>
<dbReference type="InterPro" id="IPR027477">
    <property type="entry name" value="Succ_DH/fumarate_Rdtase_cat_sf"/>
</dbReference>
<dbReference type="InterPro" id="IPR011281">
    <property type="entry name" value="Succ_DH_flav_su_fwd"/>
</dbReference>
<dbReference type="InterPro" id="IPR014006">
    <property type="entry name" value="Succ_Dhase_FrdA_Gneg"/>
</dbReference>
<dbReference type="NCBIfam" id="TIGR01816">
    <property type="entry name" value="sdhA_forward"/>
    <property type="match status" value="1"/>
</dbReference>
<dbReference type="NCBIfam" id="TIGR01812">
    <property type="entry name" value="sdhA_frdA_Gneg"/>
    <property type="match status" value="1"/>
</dbReference>
<dbReference type="PANTHER" id="PTHR11632">
    <property type="entry name" value="SUCCINATE DEHYDROGENASE 2 FLAVOPROTEIN SUBUNIT"/>
    <property type="match status" value="1"/>
</dbReference>
<dbReference type="PANTHER" id="PTHR11632:SF51">
    <property type="entry name" value="SUCCINATE DEHYDROGENASE [UBIQUINONE] FLAVOPROTEIN SUBUNIT, MITOCHONDRIAL"/>
    <property type="match status" value="1"/>
</dbReference>
<dbReference type="Pfam" id="PF00890">
    <property type="entry name" value="FAD_binding_2"/>
    <property type="match status" value="1"/>
</dbReference>
<dbReference type="Pfam" id="PF02910">
    <property type="entry name" value="Succ_DH_flav_C"/>
    <property type="match status" value="1"/>
</dbReference>
<dbReference type="PIRSF" id="PIRSF000171">
    <property type="entry name" value="SDHA_APRA_LASPO"/>
    <property type="match status" value="1"/>
</dbReference>
<dbReference type="PRINTS" id="PR00368">
    <property type="entry name" value="FADPNR"/>
</dbReference>
<dbReference type="SUPFAM" id="SSF51905">
    <property type="entry name" value="FAD/NAD(P)-binding domain"/>
    <property type="match status" value="1"/>
</dbReference>
<dbReference type="SUPFAM" id="SSF46977">
    <property type="entry name" value="Succinate dehydrogenase/fumarate reductase flavoprotein C-terminal domain"/>
    <property type="match status" value="1"/>
</dbReference>
<dbReference type="SUPFAM" id="SSF56425">
    <property type="entry name" value="Succinate dehydrogenase/fumarate reductase flavoprotein, catalytic domain"/>
    <property type="match status" value="1"/>
</dbReference>
<dbReference type="PROSITE" id="PS00504">
    <property type="entry name" value="FRD_SDH_FAD_BINDING"/>
    <property type="match status" value="1"/>
</dbReference>
<keyword id="KW-0007">Acetylation</keyword>
<keyword id="KW-0997">Cell inner membrane</keyword>
<keyword id="KW-1003">Cell membrane</keyword>
<keyword id="KW-0249">Electron transport</keyword>
<keyword id="KW-0274">FAD</keyword>
<keyword id="KW-0285">Flavoprotein</keyword>
<keyword id="KW-0472">Membrane</keyword>
<keyword id="KW-0560">Oxidoreductase</keyword>
<keyword id="KW-1185">Reference proteome</keyword>
<keyword id="KW-0813">Transport</keyword>
<keyword id="KW-0816">Tricarboxylic acid cycle</keyword>
<name>SDHA_ECO57</name>
<gene>
    <name type="primary">sdhA</name>
    <name type="ordered locus">Z0877</name>
    <name type="ordered locus">ECs0748</name>
</gene>